<dbReference type="EMBL" id="BC081891">
    <property type="protein sequence ID" value="AAH81891.1"/>
    <property type="molecule type" value="mRNA"/>
</dbReference>
<dbReference type="RefSeq" id="NP_001012155.1">
    <property type="nucleotide sequence ID" value="NM_001012155.2"/>
</dbReference>
<dbReference type="FunCoup" id="Q66HF2">
    <property type="interactions" value="2133"/>
</dbReference>
<dbReference type="STRING" id="10116.ENSRNOP00000026734"/>
<dbReference type="GlyCosmos" id="Q66HF2">
    <property type="glycosylation" value="3 sites, No reported glycans"/>
</dbReference>
<dbReference type="GlyGen" id="Q66HF2">
    <property type="glycosylation" value="3 sites"/>
</dbReference>
<dbReference type="PhosphoSitePlus" id="Q66HF2"/>
<dbReference type="jPOST" id="Q66HF2"/>
<dbReference type="PaxDb" id="10116-ENSRNOP00000026734"/>
<dbReference type="PeptideAtlas" id="Q66HF2"/>
<dbReference type="Ensembl" id="ENSRNOT00000026734.7">
    <property type="protein sequence ID" value="ENSRNOP00000026734.6"/>
    <property type="gene ID" value="ENSRNOG00000019710.7"/>
</dbReference>
<dbReference type="GeneID" id="361043"/>
<dbReference type="KEGG" id="rno:361043"/>
<dbReference type="UCSC" id="RGD:1307085">
    <property type="organism name" value="rat"/>
</dbReference>
<dbReference type="AGR" id="RGD:1307085"/>
<dbReference type="CTD" id="10548"/>
<dbReference type="RGD" id="1307085">
    <property type="gene designation" value="Tm9sf1"/>
</dbReference>
<dbReference type="eggNOG" id="KOG1277">
    <property type="taxonomic scope" value="Eukaryota"/>
</dbReference>
<dbReference type="GeneTree" id="ENSGT00940000158667"/>
<dbReference type="HOGENOM" id="CLU_010714_0_2_1"/>
<dbReference type="InParanoid" id="Q66HF2"/>
<dbReference type="PhylomeDB" id="Q66HF2"/>
<dbReference type="PRO" id="PR:Q66HF2"/>
<dbReference type="Proteomes" id="UP000002494">
    <property type="component" value="Chromosome 15"/>
</dbReference>
<dbReference type="Bgee" id="ENSRNOG00000019710">
    <property type="expression patterns" value="Expressed in liver and 20 other cell types or tissues"/>
</dbReference>
<dbReference type="GO" id="GO:0000421">
    <property type="term" value="C:autophagosome membrane"/>
    <property type="evidence" value="ECO:0007669"/>
    <property type="project" value="UniProtKB-SubCell"/>
</dbReference>
<dbReference type="GO" id="GO:0031410">
    <property type="term" value="C:cytoplasmic vesicle"/>
    <property type="evidence" value="ECO:0007669"/>
    <property type="project" value="UniProtKB-KW"/>
</dbReference>
<dbReference type="GO" id="GO:0005765">
    <property type="term" value="C:lysosomal membrane"/>
    <property type="evidence" value="ECO:0007669"/>
    <property type="project" value="UniProtKB-SubCell"/>
</dbReference>
<dbReference type="GO" id="GO:0016020">
    <property type="term" value="C:membrane"/>
    <property type="evidence" value="ECO:0000318"/>
    <property type="project" value="GO_Central"/>
</dbReference>
<dbReference type="GO" id="GO:0006914">
    <property type="term" value="P:autophagy"/>
    <property type="evidence" value="ECO:0007669"/>
    <property type="project" value="UniProtKB-KW"/>
</dbReference>
<dbReference type="GO" id="GO:0072657">
    <property type="term" value="P:protein localization to membrane"/>
    <property type="evidence" value="ECO:0000318"/>
    <property type="project" value="GO_Central"/>
</dbReference>
<dbReference type="InterPro" id="IPR004240">
    <property type="entry name" value="EMP70"/>
</dbReference>
<dbReference type="PANTHER" id="PTHR10766:SF177">
    <property type="entry name" value="TRANSMEMBRANE 9 SUPERFAMILY MEMBER 1"/>
    <property type="match status" value="1"/>
</dbReference>
<dbReference type="PANTHER" id="PTHR10766">
    <property type="entry name" value="TRANSMEMBRANE 9 SUPERFAMILY PROTEIN"/>
    <property type="match status" value="1"/>
</dbReference>
<dbReference type="Pfam" id="PF02990">
    <property type="entry name" value="EMP70"/>
    <property type="match status" value="1"/>
</dbReference>
<keyword id="KW-0072">Autophagy</keyword>
<keyword id="KW-0968">Cytoplasmic vesicle</keyword>
<keyword id="KW-0325">Glycoprotein</keyword>
<keyword id="KW-0458">Lysosome</keyword>
<keyword id="KW-0472">Membrane</keyword>
<keyword id="KW-1185">Reference proteome</keyword>
<keyword id="KW-0732">Signal</keyword>
<keyword id="KW-0812">Transmembrane</keyword>
<keyword id="KW-1133">Transmembrane helix</keyword>
<gene>
    <name type="primary">Tm9sf1</name>
</gene>
<accession>Q66HF2</accession>
<proteinExistence type="evidence at transcript level"/>
<feature type="signal peptide" evidence="2">
    <location>
        <begin position="1"/>
        <end position="27"/>
    </location>
</feature>
<feature type="chain" id="PRO_0000034364" description="Transmembrane 9 superfamily member 1">
    <location>
        <begin position="28"/>
        <end position="589"/>
    </location>
</feature>
<feature type="transmembrane region" description="Helical" evidence="2">
    <location>
        <begin position="237"/>
        <end position="257"/>
    </location>
</feature>
<feature type="transmembrane region" description="Helical" evidence="2">
    <location>
        <begin position="310"/>
        <end position="330"/>
    </location>
</feature>
<feature type="transmembrane region" description="Helical" evidence="2">
    <location>
        <begin position="339"/>
        <end position="359"/>
    </location>
</feature>
<feature type="transmembrane region" description="Helical" evidence="2">
    <location>
        <begin position="373"/>
        <end position="393"/>
    </location>
</feature>
<feature type="transmembrane region" description="Helical" evidence="2">
    <location>
        <begin position="412"/>
        <end position="432"/>
    </location>
</feature>
<feature type="transmembrane region" description="Helical" evidence="2">
    <location>
        <begin position="482"/>
        <end position="502"/>
    </location>
</feature>
<feature type="transmembrane region" description="Helical" evidence="2">
    <location>
        <begin position="518"/>
        <end position="538"/>
    </location>
</feature>
<feature type="transmembrane region" description="Helical" evidence="2">
    <location>
        <begin position="552"/>
        <end position="572"/>
    </location>
</feature>
<feature type="glycosylation site" description="N-linked (GlcNAc...) asparagine" evidence="2">
    <location>
        <position position="178"/>
    </location>
</feature>
<feature type="glycosylation site" description="N-linked (GlcNAc...) asparagine" evidence="2">
    <location>
        <position position="401"/>
    </location>
</feature>
<feature type="glycosylation site" description="N-linked (GlcNAc...) asparagine" evidence="2">
    <location>
        <position position="542"/>
    </location>
</feature>
<name>TM9S1_RAT</name>
<reference key="1">
    <citation type="journal article" date="2004" name="Genome Res.">
        <title>The status, quality, and expansion of the NIH full-length cDNA project: the Mammalian Gene Collection (MGC).</title>
        <authorList>
            <consortium name="The MGC Project Team"/>
        </authorList>
    </citation>
    <scope>NUCLEOTIDE SEQUENCE [LARGE SCALE MRNA]</scope>
    <source>
        <tissue>Kidney</tissue>
    </source>
</reference>
<protein>
    <recommendedName>
        <fullName>Transmembrane 9 superfamily member 1</fullName>
    </recommendedName>
</protein>
<evidence type="ECO:0000250" key="1"/>
<evidence type="ECO:0000255" key="2"/>
<evidence type="ECO:0000305" key="3"/>
<organism>
    <name type="scientific">Rattus norvegicus</name>
    <name type="common">Rat</name>
    <dbReference type="NCBI Taxonomy" id="10116"/>
    <lineage>
        <taxon>Eukaryota</taxon>
        <taxon>Metazoa</taxon>
        <taxon>Chordata</taxon>
        <taxon>Craniata</taxon>
        <taxon>Vertebrata</taxon>
        <taxon>Euteleostomi</taxon>
        <taxon>Mammalia</taxon>
        <taxon>Eutheria</taxon>
        <taxon>Euarchontoglires</taxon>
        <taxon>Glires</taxon>
        <taxon>Rodentia</taxon>
        <taxon>Myomorpha</taxon>
        <taxon>Muroidea</taxon>
        <taxon>Muridae</taxon>
        <taxon>Murinae</taxon>
        <taxon>Rattus</taxon>
    </lineage>
</organism>
<comment type="function">
    <text evidence="1">Plays an essential role in autophagy.</text>
</comment>
<comment type="subcellular location">
    <subcellularLocation>
        <location>Lysosome membrane</location>
        <topology>Multi-pass membrane protein</topology>
    </subcellularLocation>
    <subcellularLocation>
        <location evidence="1">Cytoplasmic vesicle</location>
        <location evidence="1">Autophagosome membrane</location>
        <topology evidence="1">Multi-pass membrane protein</topology>
    </subcellularLocation>
</comment>
<comment type="similarity">
    <text evidence="3">Belongs to the nonaspanin (TM9SF) (TC 9.A.2) family.</text>
</comment>
<sequence>MTVLGHPRSWSCHCLPVLILLLGIGHGPRVEGVTHYKPGDPVILYVNKVGPYHNPQETYHYYQLPVCCPEKIRHKSLSLGEVLDGDRMAESLYEIRFRENVEKRILCHMQLSSAQVEQLRQAIEELYYFEFVVDDLPIRGFVGYMEESGFLPHSHKIGLWTHLDFHLEFHGDRIIFANVSVRDVKPHSLDGLRSDELLGLTHTYSVRWSETSVEHRSDRRRADDGGFFPRTLEIHWLSIINSMVLVFLLVGFVAVILMRVLRNDLARYNLDEETSSGGSSDDFDQGDNGWKIIHTDVFRFPPCRGLLCAVLGVGAQFLALGTGIIVMALLGMFNVHRHGAINSAAILLYALTCCISGYVSSHFYRQIGGERWVWNIILTTSLFSVPFFLTWSVVNSVHWANGSTQALPVTTILLLLTVWLLVGFPLTVIGGIFGKNNASPFDAPCRTKNIAREIPPQPCAISVELYYIFATVWGREQYTLYGILFFVFAILLSVGACISIALTYFQLSGEDYRWWWRSVLSVGSTGLFIFLYSVFYYARRSNMSGAVQTVEFFGYSLLTGYVFFLMLGTISFFSSLKFIRYIYVNLKMD</sequence>